<reference key="1">
    <citation type="journal article" date="1996" name="Biochem. Biophys. Res. Commun.">
        <title>Identification of plexin family molecules in mice.</title>
        <authorList>
            <person name="Kameyama T."/>
            <person name="Murakami Y."/>
            <person name="Suto F."/>
            <person name="Kawakami A."/>
            <person name="Takagi S."/>
            <person name="Hirata T."/>
            <person name="Fujisawa H."/>
        </authorList>
    </citation>
    <scope>NUCLEOTIDE SEQUENCE [MRNA] (ISOFORM 1)</scope>
    <scope>TISSUE SPECIFICITY</scope>
    <source>
        <tissue>Embryonic brain</tissue>
    </source>
</reference>
<reference key="2">
    <citation type="journal article" date="2004" name="Genome Res.">
        <title>The status, quality, and expansion of the NIH full-length cDNA project: the Mammalian Gene Collection (MGC).</title>
        <authorList>
            <consortium name="The MGC Project Team"/>
        </authorList>
    </citation>
    <scope>NUCLEOTIDE SEQUENCE [LARGE SCALE MRNA] (ISOFORM 2)</scope>
    <source>
        <strain>C57BL/6J</strain>
        <tissue>Brain</tissue>
    </source>
</reference>
<reference key="3">
    <citation type="submission" date="2004-06" db="EMBL/GenBank/DDBJ databases">
        <title>Towards functional annotation of all Xq28 genes: expression and intracellular localization analyses reveal novel candidates for disease genes.</title>
        <authorList>
            <person name="Kolb-Kokocinski A.A."/>
            <person name="Mehrle A."/>
            <person name="Bechtel S."/>
            <person name="Wellenreuther R."/>
            <person name="Simpson J."/>
            <person name="Pepperkok R."/>
            <person name="Wiemann S."/>
            <person name="Poustka A."/>
        </authorList>
    </citation>
    <scope>NUCLEOTIDE SEQUENCE [LARGE SCALE MRNA] OF 1116-1560</scope>
    <source>
        <strain>NMRI</strain>
        <tissue>Embryo</tissue>
    </source>
</reference>
<reference key="4">
    <citation type="journal article" date="2005" name="Science">
        <title>The transcriptional landscape of the mammalian genome.</title>
        <authorList>
            <person name="Carninci P."/>
            <person name="Kasukawa T."/>
            <person name="Katayama S."/>
            <person name="Gough J."/>
            <person name="Frith M.C."/>
            <person name="Maeda N."/>
            <person name="Oyama R."/>
            <person name="Ravasi T."/>
            <person name="Lenhard B."/>
            <person name="Wells C."/>
            <person name="Kodzius R."/>
            <person name="Shimokawa K."/>
            <person name="Bajic V.B."/>
            <person name="Brenner S.E."/>
            <person name="Batalov S."/>
            <person name="Forrest A.R."/>
            <person name="Zavolan M."/>
            <person name="Davis M.J."/>
            <person name="Wilming L.G."/>
            <person name="Aidinis V."/>
            <person name="Allen J.E."/>
            <person name="Ambesi-Impiombato A."/>
            <person name="Apweiler R."/>
            <person name="Aturaliya R.N."/>
            <person name="Bailey T.L."/>
            <person name="Bansal M."/>
            <person name="Baxter L."/>
            <person name="Beisel K.W."/>
            <person name="Bersano T."/>
            <person name="Bono H."/>
            <person name="Chalk A.M."/>
            <person name="Chiu K.P."/>
            <person name="Choudhary V."/>
            <person name="Christoffels A."/>
            <person name="Clutterbuck D.R."/>
            <person name="Crowe M.L."/>
            <person name="Dalla E."/>
            <person name="Dalrymple B.P."/>
            <person name="de Bono B."/>
            <person name="Della Gatta G."/>
            <person name="di Bernardo D."/>
            <person name="Down T."/>
            <person name="Engstrom P."/>
            <person name="Fagiolini M."/>
            <person name="Faulkner G."/>
            <person name="Fletcher C.F."/>
            <person name="Fukushima T."/>
            <person name="Furuno M."/>
            <person name="Futaki S."/>
            <person name="Gariboldi M."/>
            <person name="Georgii-Hemming P."/>
            <person name="Gingeras T.R."/>
            <person name="Gojobori T."/>
            <person name="Green R.E."/>
            <person name="Gustincich S."/>
            <person name="Harbers M."/>
            <person name="Hayashi Y."/>
            <person name="Hensch T.K."/>
            <person name="Hirokawa N."/>
            <person name="Hill D."/>
            <person name="Huminiecki L."/>
            <person name="Iacono M."/>
            <person name="Ikeo K."/>
            <person name="Iwama A."/>
            <person name="Ishikawa T."/>
            <person name="Jakt M."/>
            <person name="Kanapin A."/>
            <person name="Katoh M."/>
            <person name="Kawasawa Y."/>
            <person name="Kelso J."/>
            <person name="Kitamura H."/>
            <person name="Kitano H."/>
            <person name="Kollias G."/>
            <person name="Krishnan S.P."/>
            <person name="Kruger A."/>
            <person name="Kummerfeld S.K."/>
            <person name="Kurochkin I.V."/>
            <person name="Lareau L.F."/>
            <person name="Lazarevic D."/>
            <person name="Lipovich L."/>
            <person name="Liu J."/>
            <person name="Liuni S."/>
            <person name="McWilliam S."/>
            <person name="Madan Babu M."/>
            <person name="Madera M."/>
            <person name="Marchionni L."/>
            <person name="Matsuda H."/>
            <person name="Matsuzawa S."/>
            <person name="Miki H."/>
            <person name="Mignone F."/>
            <person name="Miyake S."/>
            <person name="Morris K."/>
            <person name="Mottagui-Tabar S."/>
            <person name="Mulder N."/>
            <person name="Nakano N."/>
            <person name="Nakauchi H."/>
            <person name="Ng P."/>
            <person name="Nilsson R."/>
            <person name="Nishiguchi S."/>
            <person name="Nishikawa S."/>
            <person name="Nori F."/>
            <person name="Ohara O."/>
            <person name="Okazaki Y."/>
            <person name="Orlando V."/>
            <person name="Pang K.C."/>
            <person name="Pavan W.J."/>
            <person name="Pavesi G."/>
            <person name="Pesole G."/>
            <person name="Petrovsky N."/>
            <person name="Piazza S."/>
            <person name="Reed J."/>
            <person name="Reid J.F."/>
            <person name="Ring B.Z."/>
            <person name="Ringwald M."/>
            <person name="Rost B."/>
            <person name="Ruan Y."/>
            <person name="Salzberg S.L."/>
            <person name="Sandelin A."/>
            <person name="Schneider C."/>
            <person name="Schoenbach C."/>
            <person name="Sekiguchi K."/>
            <person name="Semple C.A."/>
            <person name="Seno S."/>
            <person name="Sessa L."/>
            <person name="Sheng Y."/>
            <person name="Shibata Y."/>
            <person name="Shimada H."/>
            <person name="Shimada K."/>
            <person name="Silva D."/>
            <person name="Sinclair B."/>
            <person name="Sperling S."/>
            <person name="Stupka E."/>
            <person name="Sugiura K."/>
            <person name="Sultana R."/>
            <person name="Takenaka Y."/>
            <person name="Taki K."/>
            <person name="Tammoja K."/>
            <person name="Tan S.L."/>
            <person name="Tang S."/>
            <person name="Taylor M.S."/>
            <person name="Tegner J."/>
            <person name="Teichmann S.A."/>
            <person name="Ueda H.R."/>
            <person name="van Nimwegen E."/>
            <person name="Verardo R."/>
            <person name="Wei C.L."/>
            <person name="Yagi K."/>
            <person name="Yamanishi H."/>
            <person name="Zabarovsky E."/>
            <person name="Zhu S."/>
            <person name="Zimmer A."/>
            <person name="Hide W."/>
            <person name="Bult C."/>
            <person name="Grimmond S.M."/>
            <person name="Teasdale R.D."/>
            <person name="Liu E.T."/>
            <person name="Brusic V."/>
            <person name="Quackenbush J."/>
            <person name="Wahlestedt C."/>
            <person name="Mattick J.S."/>
            <person name="Hume D.A."/>
            <person name="Kai C."/>
            <person name="Sasaki D."/>
            <person name="Tomaru Y."/>
            <person name="Fukuda S."/>
            <person name="Kanamori-Katayama M."/>
            <person name="Suzuki M."/>
            <person name="Aoki J."/>
            <person name="Arakawa T."/>
            <person name="Iida J."/>
            <person name="Imamura K."/>
            <person name="Itoh M."/>
            <person name="Kato T."/>
            <person name="Kawaji H."/>
            <person name="Kawagashira N."/>
            <person name="Kawashima T."/>
            <person name="Kojima M."/>
            <person name="Kondo S."/>
            <person name="Konno H."/>
            <person name="Nakano K."/>
            <person name="Ninomiya N."/>
            <person name="Nishio T."/>
            <person name="Okada M."/>
            <person name="Plessy C."/>
            <person name="Shibata K."/>
            <person name="Shiraki T."/>
            <person name="Suzuki S."/>
            <person name="Tagami M."/>
            <person name="Waki K."/>
            <person name="Watahiki A."/>
            <person name="Okamura-Oho Y."/>
            <person name="Suzuki H."/>
            <person name="Kawai J."/>
            <person name="Hayashizaki Y."/>
        </authorList>
    </citation>
    <scope>NUCLEOTIDE SEQUENCE [LARGE SCALE MRNA] OF 1138-1872</scope>
    <source>
        <strain>C57BL/6J</strain>
    </source>
</reference>
<reference key="5">
    <citation type="journal article" date="2001" name="Neuron">
        <title>Plexin-A3 mediates semaphorin signaling and regulates the development of hippocampal axonal projections.</title>
        <authorList>
            <person name="Cheng H.J."/>
            <person name="Bagri A."/>
            <person name="Yaron A."/>
            <person name="Stein E."/>
            <person name="Pleasure S.J."/>
            <person name="Tessier-Lavigne M."/>
        </authorList>
    </citation>
    <scope>FUNCTION</scope>
    <scope>DISRUPTION PHENOTYPE</scope>
    <scope>TISSUE SPECIFICITY</scope>
</reference>
<reference key="6">
    <citation type="journal article" date="2008" name="Dev. Biol.">
        <title>Plexin-A3 and plexin-A4 restrict the migration of sympathetic neurons but not their neural crest precursors.</title>
        <authorList>
            <person name="Waimey K.E."/>
            <person name="Huang P.H."/>
            <person name="Chen M."/>
            <person name="Cheng H.J."/>
        </authorList>
    </citation>
    <scope>DISRUPTION PHENOTYPE</scope>
    <scope>FUNCTION</scope>
</reference>
<reference key="7">
    <citation type="journal article" date="2008" name="Dev. Biol.">
        <title>Plexin A3 and plexin A4 convey semaphorin signals during facial nerve development.</title>
        <authorList>
            <person name="Schwarz Q."/>
            <person name="Waimey K.E."/>
            <person name="Golding M."/>
            <person name="Takamatsu H."/>
            <person name="Kumanogoh A."/>
            <person name="Fujisawa H."/>
            <person name="Cheng H.J."/>
            <person name="Ruhrberg C."/>
        </authorList>
    </citation>
    <scope>DISRUPTION PHENOTYPE</scope>
    <scope>FUNCTION</scope>
    <scope>TISSUE SPECIFICITY</scope>
</reference>
<reference key="8">
    <citation type="journal article" date="2008" name="J. Neurosci.">
        <title>The Semaphorin receptor PlexinA3 mediates neuronal apoptosis during dorsal root ganglia development.</title>
        <authorList>
            <person name="Ben-Zvi A."/>
            <person name="Manor O."/>
            <person name="Schachner M."/>
            <person name="Yaron A."/>
            <person name="Tessier-Lavigne M."/>
            <person name="Behar O."/>
        </authorList>
    </citation>
    <scope>DISRUPTION PHENOTYPE</scope>
    <scope>FUNCTION</scope>
</reference>
<reference key="9">
    <citation type="journal article" date="2009" name="Nature">
        <title>Secreted semaphorins control spine distribution and morphogenesis in the postnatal CNS.</title>
        <authorList>
            <person name="Tran T.S."/>
            <person name="Rubio M.E."/>
            <person name="Clem R.L."/>
            <person name="Johnson D."/>
            <person name="Case L."/>
            <person name="Tessier-Lavigne M."/>
            <person name="Huganir R.L."/>
            <person name="Ginty D.D."/>
            <person name="Kolodkin A.L."/>
        </authorList>
    </citation>
    <scope>DISRUPTION PHENOTYPE</scope>
    <scope>FUNCTION</scope>
</reference>
<reference key="10">
    <citation type="journal article" date="2010" name="Cell">
        <title>A tissue-specific atlas of mouse protein phosphorylation and expression.</title>
        <authorList>
            <person name="Huttlin E.L."/>
            <person name="Jedrychowski M.P."/>
            <person name="Elias J.E."/>
            <person name="Goswami T."/>
            <person name="Rad R."/>
            <person name="Beausoleil S.A."/>
            <person name="Villen J."/>
            <person name="Haas W."/>
            <person name="Sowa M.E."/>
            <person name="Gygi S.P."/>
        </authorList>
    </citation>
    <scope>IDENTIFICATION BY MASS SPECTROMETRY [LARGE SCALE ANALYSIS]</scope>
    <source>
        <tissue>Brain</tissue>
    </source>
</reference>
<reference key="11">
    <citation type="journal article" date="2009" name="Proc. Natl. Acad. Sci. U.S.A.">
        <title>Crystal structure of the plexin A3 intracellular region reveals an autoinhibited conformation through active site sequestration.</title>
        <authorList>
            <person name="He H."/>
            <person name="Yang T."/>
            <person name="Terman J.R."/>
            <person name="Zhang X."/>
        </authorList>
    </citation>
    <scope>X-RAY CRYSTALLOGRAPHY (1.99 ANGSTROMS) OF 1170-1795</scope>
    <scope>FUNCTION</scope>
    <scope>MUTAGENESIS OF LEU-1279; TYR-1300; PHE-1309; 1407-ARG-ARG-1408; ILE-1453; LEU-1464; GLN-1506 AND 1631-HIS-HIS-1632</scope>
</reference>
<sequence>MPTVCLLPLLFFTIGGCLGSSRPFRTFVVTDTTLTHLAVHRVTGEVFVGAVNRVFKLAPNLTELRAHVTGPIEDNARCYPPPSMRVCSHRLVPVDNVNKLLLIDYAARRLVACGSIWQGICQFLRLDDLFKLGEPHHRKEHYLSGAQEPDSMAGVIVEQVQGPSKLFVGTAVDGKSEYFPTLSSRKLIDDEDSGDMFSLVYQDEFVSSQIKIPSDTLSLYPAFDIYYIYGFVSASFVYFLTLQLDTQQTLLDTAGEKFFTSKIVRMCAGDSEFYSYVEFPIGCSWRGVEYRLVQSAHLAKPGLLLAQALGVPADEDVLFTIFSQGQKNRANPPRQTILCLFTLSSINAHIRRRIQSCYRGEGTLALPWLLNKELPCINTPLQINGNFCGLVLNQPLGGLHVIEGLPLLADSTDGMASVAAYTYHQHSVVFIGTRSGNLKKVRVDGSQDAQLYETVSVVQGSPILRDLLFSPDHRHIYLLSEKQVSQLPVETCEQYLSCAACLGSGDPHCGWCVLQHRCCREGACPGASAPHGFAEELSKCIQVRVRPNNVSVTSSGVQLTVAMRNVPDLSVGVSCSFEEVTESEAILLPSGELRCPSPSLQELQTLTRGHGATHTVRLQLLSMETGVRFAGVDFVFYNCSALQSCMSCVGSPYPCHWCKYRHVCTSHPHECSFQEGRVHSPEGCPEILPQGDLLIPVGVMQPLTLRAKNLPQPQSGQKNYECVVRVQGRQHRVPAVRFNSSSVQCQNASYFYEGDEFGDTELDFSVVWDGDFPIDKPPSFRALLYKCWAQRPSCGLCLKADPRFNCGWCISEHRCQLRAHCPAPKSNWMHPSQKGARCSHPRITQIHPLTGPKEGGTRVTIVGENLGLTSREVGLRVAGVRCNSIPTEYVSAERIVCEMEESLVPSPPPGPAELCVGDCSADFRTQSQQLYSFVTPTFDRVSPSRGPASGGTRLTISGISLDAGSRVTVIIRDGECQFVRRDAEAIVCISPVSTLGPSQSPITLAIDHANISNTGVIYTYTQDPTVTHLEPTWSIINGSTSITVSGTHLLTVQEPRVRAKYRGIETTNTCQVINDTAMLCKAPGIFLGHPQPRAQGEHPDEFGFLLDHVQAARSLNRSSFTYYPDPSFEPLGPSGVLDVKPGSHVVLKGKNLIPAAAGSSRLNYTVLIGGQPCALTVSDTQLLCDSPSQTGRQPVMVLVGGLEFWLGTLHITADRALTLPAMVGLAAGGGLLLLAITVVLVAYKRKTQDADRTLKRLQLQMDNLESRVALECKEAFAELQTDINELTNHMDGVQIPFLDYRTYAVRVLFPGIEAHPVLKELDTPPNVEKALRLFGQLLHSRAFLLTFIHTLEAQSSFSMRDRGTVASLTMVALQSRLDYATGLLKQLLADLIEKNLESKNHPKLLLRRTESVAEKMLTNWFTFLLHKFLKECAGEPLFLLYCAIKQQMEKGPIDAITGEARYSLSEDKLIRQQIDYKTLTLHCVCPESEGSAQVPVKVLNCDSITQAKDKLLDTVYKGIPYSQRPKAEDMDLEWRQGRMARIILQDEDITTKIECDWKRVNSLAHYQVTDGSLVALVPKQVSAYNMANSFTFTRSLSRYESLLRAASSPDSLRSRAPMLTPDQEAGTKLWHLVRNHDHTDHREGDRGSKMVSEIYLTRLLATKGTLQKFVDDLFETVFSTAHRGSALPLAIKYMFDFLDEQADQRQISDPDVRHTWKSNCLPLRFWVNVIKNPQFVFDIHKNSITDACLSVVAQTFMDSCSTSEHRLGKDSPSNKLLYAKDIPNYKSWVERYYRDIAKMASISDQDMDAYLVEQSRLHANDFNVLSALSELYFYVTKYRQEILTSLDRDASCRKHKLRQKLEQIITLVSSSS</sequence>
<feature type="signal peptide" evidence="2">
    <location>
        <begin position="1"/>
        <end position="19"/>
    </location>
</feature>
<feature type="chain" id="PRO_0000411104" description="Plexin-A3">
    <location>
        <begin position="20"/>
        <end position="1872"/>
    </location>
</feature>
<feature type="topological domain" description="Extracellular" evidence="2">
    <location>
        <begin position="20"/>
        <end position="1220"/>
    </location>
</feature>
<feature type="transmembrane region" description="Helical" evidence="2">
    <location>
        <begin position="1221"/>
        <end position="1241"/>
    </location>
</feature>
<feature type="topological domain" description="Cytoplasmic" evidence="2">
    <location>
        <begin position="1242"/>
        <end position="1872"/>
    </location>
</feature>
<feature type="domain" description="Sema" evidence="3">
    <location>
        <begin position="20"/>
        <end position="489"/>
    </location>
</feature>
<feature type="domain" description="IPT/TIG 1">
    <location>
        <begin position="841"/>
        <end position="934"/>
    </location>
</feature>
<feature type="domain" description="IPT/TIG 2">
    <location>
        <begin position="936"/>
        <end position="1021"/>
    </location>
</feature>
<feature type="domain" description="IPT/TIG 3">
    <location>
        <begin position="1024"/>
        <end position="1123"/>
    </location>
</feature>
<feature type="domain" description="IPT/TIG 4">
    <location>
        <begin position="1126"/>
        <end position="1212"/>
    </location>
</feature>
<feature type="coiled-coil region" evidence="2">
    <location>
        <begin position="1240"/>
        <end position="1294"/>
    </location>
</feature>
<feature type="modified residue" description="Phosphoserine" evidence="1">
    <location>
        <position position="1597"/>
    </location>
</feature>
<feature type="glycosylation site" description="N-linked (GlcNAc...) asparagine" evidence="2">
    <location>
        <position position="60"/>
    </location>
</feature>
<feature type="glycosylation site" description="N-linked (GlcNAc...) asparagine" evidence="2">
    <location>
        <position position="549"/>
    </location>
</feature>
<feature type="glycosylation site" description="N-linked (GlcNAc...) asparagine" evidence="2">
    <location>
        <position position="1163"/>
    </location>
</feature>
<feature type="disulfide bond" evidence="3">
    <location>
        <begin position="78"/>
        <end position="87"/>
    </location>
</feature>
<feature type="disulfide bond" evidence="3">
    <location>
        <begin position="113"/>
        <end position="121"/>
    </location>
</feature>
<feature type="disulfide bond" evidence="3">
    <location>
        <begin position="267"/>
        <end position="388"/>
    </location>
</feature>
<feature type="disulfide bond" evidence="3">
    <location>
        <begin position="283"/>
        <end position="339"/>
    </location>
</feature>
<feature type="disulfide bond" evidence="3">
    <location>
        <begin position="357"/>
        <end position="376"/>
    </location>
</feature>
<feature type="disulfide bond" evidence="3">
    <location>
        <begin position="492"/>
        <end position="509"/>
    </location>
</feature>
<feature type="disulfide bond" evidence="3">
    <location>
        <begin position="498"/>
        <end position="540"/>
    </location>
</feature>
<feature type="disulfide bond" evidence="3">
    <location>
        <begin position="501"/>
        <end position="518"/>
    </location>
</feature>
<feature type="disulfide bond" evidence="3">
    <location>
        <begin position="512"/>
        <end position="524"/>
    </location>
</feature>
<feature type="disulfide bond" evidence="3">
    <location>
        <begin position="575"/>
        <end position="595"/>
    </location>
</feature>
<feature type="splice variant" id="VSP_041609" description="In isoform 2." evidence="11">
    <location>
        <begin position="1072"/>
        <end position="1148"/>
    </location>
</feature>
<feature type="mutagenesis site" description="Strongly reduced response to semaphorin." evidence="8">
    <original>L</original>
    <variation>R</variation>
    <location>
        <position position="1279"/>
    </location>
</feature>
<feature type="mutagenesis site" description="Almost abolishes response to semaphorin." evidence="8">
    <original>Y</original>
    <variation>A</variation>
    <location>
        <position position="1300"/>
    </location>
</feature>
<feature type="mutagenesis site" description="Almost abolishes response to semaphorin." evidence="8">
    <original>F</original>
    <variation>A</variation>
    <location>
        <position position="1309"/>
    </location>
</feature>
<feature type="mutagenesis site" description="Abolishes response to semaphorin." evidence="8">
    <original>RR</original>
    <variation>AA</variation>
    <location>
        <begin position="1407"/>
        <end position="1408"/>
    </location>
</feature>
<feature type="mutagenesis site" description="Abolishes response to semaphorin." evidence="8">
    <original>I</original>
    <variation>R</variation>
    <location>
        <position position="1453"/>
    </location>
</feature>
<feature type="mutagenesis site" description="Almost abolishes response to semaphorin." evidence="8">
    <original>L</original>
    <variation>G</variation>
    <location>
        <position position="1464"/>
    </location>
</feature>
<feature type="mutagenesis site" description="Abolishes response to semaphorin." evidence="8">
    <original>Q</original>
    <variation>A</variation>
    <location>
        <position position="1506"/>
    </location>
</feature>
<feature type="mutagenesis site" description="Abolishes response to semaphorin." evidence="8">
    <original>HL</original>
    <variation>AA</variation>
    <location>
        <begin position="1631"/>
        <end position="1632"/>
    </location>
</feature>
<feature type="sequence conflict" description="In Ref. 4; BAC33681." evidence="12" ref="4">
    <original>T</original>
    <variation>A</variation>
    <location>
        <position position="1627"/>
    </location>
</feature>
<feature type="sequence conflict" description="In Ref. 1; BAA13190." evidence="12" ref="1">
    <original>L</original>
    <variation>P</variation>
    <location>
        <position position="1861"/>
    </location>
</feature>
<feature type="helix" evidence="13">
    <location>
        <begin position="1248"/>
        <end position="1286"/>
    </location>
</feature>
<feature type="helix" evidence="13">
    <location>
        <begin position="1300"/>
        <end position="1308"/>
    </location>
</feature>
<feature type="helix" evidence="13">
    <location>
        <begin position="1316"/>
        <end position="1318"/>
    </location>
</feature>
<feature type="helix" evidence="13">
    <location>
        <begin position="1325"/>
        <end position="1337"/>
    </location>
</feature>
<feature type="helix" evidence="13">
    <location>
        <begin position="1341"/>
        <end position="1352"/>
    </location>
</feature>
<feature type="helix" evidence="13">
    <location>
        <begin position="1359"/>
        <end position="1372"/>
    </location>
</feature>
<feature type="helix" evidence="13">
    <location>
        <begin position="1374"/>
        <end position="1376"/>
    </location>
</feature>
<feature type="helix" evidence="13">
    <location>
        <begin position="1377"/>
        <end position="1397"/>
    </location>
</feature>
<feature type="turn" evidence="13">
    <location>
        <begin position="1403"/>
        <end position="1407"/>
    </location>
</feature>
<feature type="helix" evidence="13">
    <location>
        <begin position="1412"/>
        <end position="1424"/>
    </location>
</feature>
<feature type="helix" evidence="13">
    <location>
        <begin position="1426"/>
        <end position="1431"/>
    </location>
</feature>
<feature type="helix" evidence="13">
    <location>
        <begin position="1434"/>
        <end position="1448"/>
    </location>
</feature>
<feature type="turn" evidence="13">
    <location>
        <begin position="1455"/>
        <end position="1457"/>
    </location>
</feature>
<feature type="helix" evidence="13">
    <location>
        <begin position="1466"/>
        <end position="1468"/>
    </location>
</feature>
<feature type="strand" evidence="13">
    <location>
        <begin position="1478"/>
        <end position="1484"/>
    </location>
</feature>
<feature type="turn" evidence="13">
    <location>
        <begin position="1486"/>
        <end position="1488"/>
    </location>
</feature>
<feature type="strand" evidence="13">
    <location>
        <begin position="1493"/>
        <end position="1499"/>
    </location>
</feature>
<feature type="helix" evidence="13">
    <location>
        <begin position="1504"/>
        <end position="1515"/>
    </location>
</feature>
<feature type="turn" evidence="13">
    <location>
        <begin position="1516"/>
        <end position="1518"/>
    </location>
</feature>
<feature type="helix" evidence="13">
    <location>
        <begin position="1521"/>
        <end position="1523"/>
    </location>
</feature>
<feature type="helix" evidence="13">
    <location>
        <begin position="1527"/>
        <end position="1529"/>
    </location>
</feature>
<feature type="strand" evidence="13">
    <location>
        <begin position="1530"/>
        <end position="1536"/>
    </location>
</feature>
<feature type="strand" evidence="13">
    <location>
        <begin position="1541"/>
        <end position="1544"/>
    </location>
</feature>
<feature type="strand" evidence="13">
    <location>
        <begin position="1546"/>
        <end position="1548"/>
    </location>
</feature>
<feature type="strand" evidence="13">
    <location>
        <begin position="1557"/>
        <end position="1559"/>
    </location>
</feature>
<feature type="turn" evidence="13">
    <location>
        <begin position="1563"/>
        <end position="1567"/>
    </location>
</feature>
<feature type="strand" evidence="13">
    <location>
        <begin position="1573"/>
        <end position="1578"/>
    </location>
</feature>
<feature type="strand" evidence="13">
    <location>
        <begin position="1628"/>
        <end position="1632"/>
    </location>
</feature>
<feature type="helix" evidence="13">
    <location>
        <begin position="1653"/>
        <end position="1677"/>
    </location>
</feature>
<feature type="helix" evidence="13">
    <location>
        <begin position="1682"/>
        <end position="1684"/>
    </location>
</feature>
<feature type="helix" evidence="13">
    <location>
        <begin position="1689"/>
        <end position="1703"/>
    </location>
</feature>
<feature type="turn" evidence="13">
    <location>
        <begin position="1704"/>
        <end position="1706"/>
    </location>
</feature>
<feature type="helix" evidence="13">
    <location>
        <begin position="1710"/>
        <end position="1720"/>
    </location>
</feature>
<feature type="turn" evidence="13">
    <location>
        <begin position="1721"/>
        <end position="1724"/>
    </location>
</feature>
<feature type="helix" evidence="13">
    <location>
        <begin position="1725"/>
        <end position="1731"/>
    </location>
</feature>
<feature type="helix" evidence="13">
    <location>
        <begin position="1733"/>
        <end position="1735"/>
    </location>
</feature>
<feature type="helix" evidence="13">
    <location>
        <begin position="1743"/>
        <end position="1759"/>
    </location>
</feature>
<feature type="helix" evidence="13">
    <location>
        <begin position="1773"/>
        <end position="1777"/>
    </location>
</feature>
<feature type="turn" evidence="13">
    <location>
        <begin position="1778"/>
        <end position="1781"/>
    </location>
</feature>
<feature type="helix" evidence="13">
    <location>
        <begin position="1782"/>
        <end position="1798"/>
    </location>
</feature>
<feature type="helix" evidence="13">
    <location>
        <begin position="1804"/>
        <end position="1817"/>
    </location>
</feature>
<feature type="turn" evidence="13">
    <location>
        <begin position="1818"/>
        <end position="1820"/>
    </location>
</feature>
<feature type="helix" evidence="13">
    <location>
        <begin position="1824"/>
        <end position="1837"/>
    </location>
</feature>
<feature type="helix" evidence="13">
    <location>
        <begin position="1839"/>
        <end position="1848"/>
    </location>
</feature>
<feature type="helix" evidence="13">
    <location>
        <begin position="1850"/>
        <end position="1854"/>
    </location>
</feature>
<feature type="helix" evidence="13">
    <location>
        <begin position="1857"/>
        <end position="1869"/>
    </location>
</feature>
<comment type="function">
    <text evidence="4 5 6 7 8 9">Coreceptor for SEMA3A and SEMA3F. Necessary for signaling by class 3 semaphorins and subsequent remodeling of the cytoskeleton. Plays a role in axon guidance in the developing nervous system. Regulates the migration of sympathetic neurons, but not of neural crest precursors. Required for normal dendrite spine morphology in pyramidal neurons. May play a role in regulating semaphorin-mediated programmed cell death in the developing nervous system. Class 3 semaphorins bind to a complex composed of a neuropilin and a plexin. The plexin modulates the affinity of the complex for specific semaphorins, and its cytoplasmic domain is required for the activation of down-stream signaling events in the cytoplasm.</text>
</comment>
<comment type="subcellular location">
    <subcellularLocation>
        <location>Cell membrane</location>
        <topology>Single-pass type I membrane protein</topology>
    </subcellularLocation>
</comment>
<comment type="alternative products">
    <event type="alternative splicing"/>
    <isoform>
        <id>P70208-1</id>
        <name>1</name>
        <sequence type="displayed"/>
    </isoform>
    <isoform>
        <id>P70208-2</id>
        <name>2</name>
        <sequence type="described" ref="VSP_041609"/>
    </isoform>
</comment>
<comment type="tissue specificity">
    <text evidence="4 6 10">Detected in embryonic hindbrain, spinal cord, dorsal root ganglion, trigeminal ganglion and superior cervical ganglion. In newborns, detected throughout all layers of the hippocampus.</text>
</comment>
<comment type="disruption phenotype">
    <text evidence="4 5 6 7 9">No visible phenotype, but causes subtle changes in the central nervous system. Mice exhibit altered apical dendrite spine morphology in pyramidal neurons. Mice exhibit defasciculation of the facial branchiomotor nerve and of the ophthalmic branch of the trigeminus, with variable severity. The number of neurons in the dorsal root ganglion is higher than normal, probably due to reduced neuronal apoptosis. In mice lacking both Plxna3 and Plxna4, migrating neurons do not show the normal response to Sema3A and Sema3F and do not migrate away from these semaphorins (in vitro).</text>
</comment>
<comment type="similarity">
    <text evidence="12">Belongs to the plexin family.</text>
</comment>
<protein>
    <recommendedName>
        <fullName>Plexin-A3</fullName>
    </recommendedName>
</protein>
<proteinExistence type="evidence at protein level"/>
<organism>
    <name type="scientific">Mus musculus</name>
    <name type="common">Mouse</name>
    <dbReference type="NCBI Taxonomy" id="10090"/>
    <lineage>
        <taxon>Eukaryota</taxon>
        <taxon>Metazoa</taxon>
        <taxon>Chordata</taxon>
        <taxon>Craniata</taxon>
        <taxon>Vertebrata</taxon>
        <taxon>Euteleostomi</taxon>
        <taxon>Mammalia</taxon>
        <taxon>Eutheria</taxon>
        <taxon>Euarchontoglires</taxon>
        <taxon>Glires</taxon>
        <taxon>Rodentia</taxon>
        <taxon>Myomorpha</taxon>
        <taxon>Muroidea</taxon>
        <taxon>Muridae</taxon>
        <taxon>Murinae</taxon>
        <taxon>Mus</taxon>
        <taxon>Mus</taxon>
    </lineage>
</organism>
<keyword id="KW-0002">3D-structure</keyword>
<keyword id="KW-0025">Alternative splicing</keyword>
<keyword id="KW-1003">Cell membrane</keyword>
<keyword id="KW-0175">Coiled coil</keyword>
<keyword id="KW-1015">Disulfide bond</keyword>
<keyword id="KW-0325">Glycoprotein</keyword>
<keyword id="KW-0472">Membrane</keyword>
<keyword id="KW-0597">Phosphoprotein</keyword>
<keyword id="KW-0675">Receptor</keyword>
<keyword id="KW-1185">Reference proteome</keyword>
<keyword id="KW-0677">Repeat</keyword>
<keyword id="KW-0732">Signal</keyword>
<keyword id="KW-0812">Transmembrane</keyword>
<keyword id="KW-1133">Transmembrane helix</keyword>
<name>PLXA3_MOUSE</name>
<accession>P70208</accession>
<accession>A5D6Q5</accession>
<accession>Q684J0</accession>
<accession>Q8BWZ5</accession>
<gene>
    <name type="primary">Plxna3</name>
</gene>
<evidence type="ECO:0000250" key="1">
    <source>
        <dbReference type="UniProtKB" id="P51805"/>
    </source>
</evidence>
<evidence type="ECO:0000255" key="2"/>
<evidence type="ECO:0000255" key="3">
    <source>
        <dbReference type="PROSITE-ProRule" id="PRU00352"/>
    </source>
</evidence>
<evidence type="ECO:0000269" key="4">
    <source>
    </source>
</evidence>
<evidence type="ECO:0000269" key="5">
    <source>
    </source>
</evidence>
<evidence type="ECO:0000269" key="6">
    <source>
    </source>
</evidence>
<evidence type="ECO:0000269" key="7">
    <source>
    </source>
</evidence>
<evidence type="ECO:0000269" key="8">
    <source>
    </source>
</evidence>
<evidence type="ECO:0000269" key="9">
    <source>
    </source>
</evidence>
<evidence type="ECO:0000269" key="10">
    <source>
    </source>
</evidence>
<evidence type="ECO:0000303" key="11">
    <source>
    </source>
</evidence>
<evidence type="ECO:0000305" key="12"/>
<evidence type="ECO:0007829" key="13">
    <source>
        <dbReference type="PDB" id="3IG3"/>
    </source>
</evidence>
<dbReference type="EMBL" id="D86950">
    <property type="protein sequence ID" value="BAA13190.1"/>
    <property type="molecule type" value="mRNA"/>
</dbReference>
<dbReference type="EMBL" id="BC093482">
    <property type="protein sequence ID" value="AAH93482.1"/>
    <property type="molecule type" value="mRNA"/>
</dbReference>
<dbReference type="EMBL" id="AJ748653">
    <property type="protein sequence ID" value="CAG38687.1"/>
    <property type="molecule type" value="mRNA"/>
</dbReference>
<dbReference type="EMBL" id="AK049319">
    <property type="protein sequence ID" value="BAC33681.1"/>
    <property type="molecule type" value="mRNA"/>
</dbReference>
<dbReference type="CCDS" id="CCDS30228.1">
    <molecule id="P70208-1"/>
</dbReference>
<dbReference type="PIR" id="JC4976">
    <property type="entry name" value="JC4976"/>
</dbReference>
<dbReference type="RefSeq" id="NP_001345058.1">
    <molecule id="P70208-2"/>
    <property type="nucleotide sequence ID" value="NM_001358129.1"/>
</dbReference>
<dbReference type="RefSeq" id="NP_032909.2">
    <molecule id="P70208-1"/>
    <property type="nucleotide sequence ID" value="NM_008883.2"/>
</dbReference>
<dbReference type="RefSeq" id="XP_006527963.1">
    <property type="nucleotide sequence ID" value="XM_006527900.2"/>
</dbReference>
<dbReference type="PDB" id="3IG3">
    <property type="method" value="X-ray"/>
    <property type="resolution" value="1.99 A"/>
    <property type="chains" value="A=1247-1872"/>
</dbReference>
<dbReference type="PDBsum" id="3IG3"/>
<dbReference type="SMR" id="P70208"/>
<dbReference type="BioGRID" id="202263">
    <property type="interactions" value="4"/>
</dbReference>
<dbReference type="DIP" id="DIP-48959N"/>
<dbReference type="FunCoup" id="P70208">
    <property type="interactions" value="131"/>
</dbReference>
<dbReference type="STRING" id="10090.ENSMUSP00000004326"/>
<dbReference type="GlyConnect" id="2591">
    <property type="glycosylation" value="1 N-Linked glycan (1 site)"/>
</dbReference>
<dbReference type="GlyCosmos" id="P70208">
    <property type="glycosylation" value="4 sites, 1 glycan"/>
</dbReference>
<dbReference type="GlyGen" id="P70208">
    <property type="glycosylation" value="6 sites, 5 N-linked glycans (4 sites), 1 O-linked glycan (1 site)"/>
</dbReference>
<dbReference type="iPTMnet" id="P70208"/>
<dbReference type="PhosphoSitePlus" id="P70208"/>
<dbReference type="PaxDb" id="10090-ENSMUSP00000004326"/>
<dbReference type="PeptideAtlas" id="P70208"/>
<dbReference type="ProteomicsDB" id="289630">
    <molecule id="P70208-1"/>
</dbReference>
<dbReference type="ProteomicsDB" id="289631">
    <molecule id="P70208-2"/>
</dbReference>
<dbReference type="Pumba" id="P70208"/>
<dbReference type="Antibodypedia" id="31267">
    <property type="antibodies" value="59 antibodies from 18 providers"/>
</dbReference>
<dbReference type="DNASU" id="18846"/>
<dbReference type="Ensembl" id="ENSMUST00000004326.4">
    <molecule id="P70208-1"/>
    <property type="protein sequence ID" value="ENSMUSP00000004326.4"/>
    <property type="gene ID" value="ENSMUSG00000031398.14"/>
</dbReference>
<dbReference type="GeneID" id="18846"/>
<dbReference type="KEGG" id="mmu:18846"/>
<dbReference type="UCSC" id="uc009too.1">
    <molecule id="P70208-1"/>
    <property type="organism name" value="mouse"/>
</dbReference>
<dbReference type="UCSC" id="uc012hku.1">
    <molecule id="P70208-2"/>
    <property type="organism name" value="mouse"/>
</dbReference>
<dbReference type="AGR" id="MGI:107683"/>
<dbReference type="CTD" id="55558"/>
<dbReference type="MGI" id="MGI:107683">
    <property type="gene designation" value="Plxna3"/>
</dbReference>
<dbReference type="VEuPathDB" id="HostDB:ENSMUSG00000031398"/>
<dbReference type="eggNOG" id="KOG3610">
    <property type="taxonomic scope" value="Eukaryota"/>
</dbReference>
<dbReference type="GeneTree" id="ENSGT01050000244850"/>
<dbReference type="HOGENOM" id="CLU_001436_2_0_1"/>
<dbReference type="InParanoid" id="P70208"/>
<dbReference type="OMA" id="CPEILPR"/>
<dbReference type="OrthoDB" id="125363at2759"/>
<dbReference type="PhylomeDB" id="P70208"/>
<dbReference type="TreeFam" id="TF312962"/>
<dbReference type="Reactome" id="R-MMU-399954">
    <property type="pathway name" value="Sema3A PAK dependent Axon repulsion"/>
</dbReference>
<dbReference type="Reactome" id="R-MMU-399955">
    <property type="pathway name" value="SEMA3A-Plexin repulsion signaling by inhibiting Integrin adhesion"/>
</dbReference>
<dbReference type="Reactome" id="R-MMU-399956">
    <property type="pathway name" value="CRMPs in Sema3A signaling"/>
</dbReference>
<dbReference type="BioGRID-ORCS" id="18846">
    <property type="hits" value="2 hits in 77 CRISPR screens"/>
</dbReference>
<dbReference type="ChiTaRS" id="Plxna3">
    <property type="organism name" value="mouse"/>
</dbReference>
<dbReference type="EvolutionaryTrace" id="P70208"/>
<dbReference type="PRO" id="PR:P70208"/>
<dbReference type="Proteomes" id="UP000000589">
    <property type="component" value="Chromosome X"/>
</dbReference>
<dbReference type="RNAct" id="P70208">
    <property type="molecule type" value="protein"/>
</dbReference>
<dbReference type="Bgee" id="ENSMUSG00000031398">
    <property type="expression patterns" value="Expressed in cortical plate and 270 other cell types or tissues"/>
</dbReference>
<dbReference type="ExpressionAtlas" id="P70208">
    <property type="expression patterns" value="baseline and differential"/>
</dbReference>
<dbReference type="GO" id="GO:0005886">
    <property type="term" value="C:plasma membrane"/>
    <property type="evidence" value="ECO:0007669"/>
    <property type="project" value="UniProtKB-SubCell"/>
</dbReference>
<dbReference type="GO" id="GO:0017154">
    <property type="term" value="F:semaphorin receptor activity"/>
    <property type="evidence" value="ECO:0000315"/>
    <property type="project" value="UniProtKB"/>
</dbReference>
<dbReference type="GO" id="GO:0048846">
    <property type="term" value="P:axon extension involved in axon guidance"/>
    <property type="evidence" value="ECO:0000316"/>
    <property type="project" value="MGI"/>
</dbReference>
<dbReference type="GO" id="GO:0007411">
    <property type="term" value="P:axon guidance"/>
    <property type="evidence" value="ECO:0000315"/>
    <property type="project" value="MGI"/>
</dbReference>
<dbReference type="GO" id="GO:0021785">
    <property type="term" value="P:branchiomotor neuron axon guidance"/>
    <property type="evidence" value="ECO:0000315"/>
    <property type="project" value="ParkinsonsUK-UCL"/>
</dbReference>
<dbReference type="GO" id="GO:0021612">
    <property type="term" value="P:facial nerve structural organization"/>
    <property type="evidence" value="ECO:0000315"/>
    <property type="project" value="ParkinsonsUK-UCL"/>
</dbReference>
<dbReference type="GO" id="GO:0021828">
    <property type="term" value="P:gonadotrophin-releasing hormone neuronal migration to the hypothalamus"/>
    <property type="evidence" value="ECO:0000316"/>
    <property type="project" value="ARUK-UCL"/>
</dbReference>
<dbReference type="GO" id="GO:0021766">
    <property type="term" value="P:hippocampus development"/>
    <property type="evidence" value="ECO:0000315"/>
    <property type="project" value="MGI"/>
</dbReference>
<dbReference type="GO" id="GO:0050919">
    <property type="term" value="P:negative chemotaxis"/>
    <property type="evidence" value="ECO:0000316"/>
    <property type="project" value="MGI"/>
</dbReference>
<dbReference type="GO" id="GO:0048843">
    <property type="term" value="P:negative regulation of axon extension involved in axon guidance"/>
    <property type="evidence" value="ECO:0000316"/>
    <property type="project" value="MGI"/>
</dbReference>
<dbReference type="GO" id="GO:1990138">
    <property type="term" value="P:neuron projection extension"/>
    <property type="evidence" value="ECO:0000316"/>
    <property type="project" value="MGI"/>
</dbReference>
<dbReference type="GO" id="GO:0097485">
    <property type="term" value="P:neuron projection guidance"/>
    <property type="evidence" value="ECO:0000315"/>
    <property type="project" value="MGI"/>
</dbReference>
<dbReference type="GO" id="GO:0021628">
    <property type="term" value="P:olfactory nerve formation"/>
    <property type="evidence" value="ECO:0000316"/>
    <property type="project" value="ARUK-UCL"/>
</dbReference>
<dbReference type="GO" id="GO:0051495">
    <property type="term" value="P:positive regulation of cytoskeleton organization"/>
    <property type="evidence" value="ECO:0000315"/>
    <property type="project" value="UniProtKB"/>
</dbReference>
<dbReference type="GO" id="GO:0021860">
    <property type="term" value="P:pyramidal neuron development"/>
    <property type="evidence" value="ECO:0000315"/>
    <property type="project" value="MGI"/>
</dbReference>
<dbReference type="GO" id="GO:0071526">
    <property type="term" value="P:semaphorin-plexin signaling pathway"/>
    <property type="evidence" value="ECO:0000315"/>
    <property type="project" value="ParkinsonsUK-UCL"/>
</dbReference>
<dbReference type="GO" id="GO:0021637">
    <property type="term" value="P:trigeminal nerve structural organization"/>
    <property type="evidence" value="ECO:0000315"/>
    <property type="project" value="ParkinsonsUK-UCL"/>
</dbReference>
<dbReference type="CDD" id="cd00603">
    <property type="entry name" value="IPT_PCSR"/>
    <property type="match status" value="1"/>
</dbReference>
<dbReference type="CDD" id="cd01180">
    <property type="entry name" value="IPT_plexin_repeat1"/>
    <property type="match status" value="1"/>
</dbReference>
<dbReference type="CDD" id="cd01179">
    <property type="entry name" value="IPT_plexin_repeat2"/>
    <property type="match status" value="1"/>
</dbReference>
<dbReference type="CDD" id="cd01181">
    <property type="entry name" value="IPT_plexin_repeat3"/>
    <property type="match status" value="1"/>
</dbReference>
<dbReference type="CDD" id="cd12790">
    <property type="entry name" value="RasGAP_plexin_A"/>
    <property type="match status" value="1"/>
</dbReference>
<dbReference type="CDD" id="cd11273">
    <property type="entry name" value="Sema_plexin_A3"/>
    <property type="match status" value="1"/>
</dbReference>
<dbReference type="FunFam" id="1.10.506.10:FF:000005">
    <property type="entry name" value="Plexin A1"/>
    <property type="match status" value="1"/>
</dbReference>
<dbReference type="FunFam" id="1.10.506.10:FF:000006">
    <property type="entry name" value="Plexin A1"/>
    <property type="match status" value="1"/>
</dbReference>
<dbReference type="FunFam" id="2.60.40.10:FF:000123">
    <property type="entry name" value="Plexin A1"/>
    <property type="match status" value="1"/>
</dbReference>
<dbReference type="FunFam" id="2.130.10.10:FF:000006">
    <property type="entry name" value="Plexin A2"/>
    <property type="match status" value="1"/>
</dbReference>
<dbReference type="FunFam" id="2.60.40.10:FF:000071">
    <property type="entry name" value="Plexin A2"/>
    <property type="match status" value="1"/>
</dbReference>
<dbReference type="FunFam" id="3.10.20.90:FF:000157">
    <property type="entry name" value="Plexin A3"/>
    <property type="match status" value="1"/>
</dbReference>
<dbReference type="FunFam" id="2.60.40.10:FF:000329">
    <property type="entry name" value="Plexin A4"/>
    <property type="match status" value="1"/>
</dbReference>
<dbReference type="FunFam" id="2.60.40.10:FF:001973">
    <property type="entry name" value="Plexin A4, B"/>
    <property type="match status" value="1"/>
</dbReference>
<dbReference type="FunFam" id="2.60.40.10:FF:000630">
    <property type="entry name" value="Plexin D1"/>
    <property type="match status" value="1"/>
</dbReference>
<dbReference type="Gene3D" id="1.10.506.10">
    <property type="entry name" value="GTPase Activation - p120gap, domain 1"/>
    <property type="match status" value="1"/>
</dbReference>
<dbReference type="Gene3D" id="2.60.40.10">
    <property type="entry name" value="Immunoglobulins"/>
    <property type="match status" value="5"/>
</dbReference>
<dbReference type="Gene3D" id="3.10.20.90">
    <property type="entry name" value="Phosphatidylinositol 3-kinase Catalytic Subunit, Chain A, domain 1"/>
    <property type="match status" value="1"/>
</dbReference>
<dbReference type="Gene3D" id="2.130.10.10">
    <property type="entry name" value="YVTN repeat-like/Quinoprotein amine dehydrogenase"/>
    <property type="match status" value="1"/>
</dbReference>
<dbReference type="InterPro" id="IPR013783">
    <property type="entry name" value="Ig-like_fold"/>
</dbReference>
<dbReference type="InterPro" id="IPR014756">
    <property type="entry name" value="Ig_E-set"/>
</dbReference>
<dbReference type="InterPro" id="IPR002909">
    <property type="entry name" value="IPT_dom"/>
</dbReference>
<dbReference type="InterPro" id="IPR031148">
    <property type="entry name" value="Plexin"/>
</dbReference>
<dbReference type="InterPro" id="IPR013548">
    <property type="entry name" value="Plexin_cytoplasmic_RasGAP_dom"/>
</dbReference>
<dbReference type="InterPro" id="IPR046800">
    <property type="entry name" value="Plexin_RBD"/>
</dbReference>
<dbReference type="InterPro" id="IPR002165">
    <property type="entry name" value="Plexin_repeat"/>
</dbReference>
<dbReference type="InterPro" id="IPR016201">
    <property type="entry name" value="PSI"/>
</dbReference>
<dbReference type="InterPro" id="IPR008936">
    <property type="entry name" value="Rho_GTPase_activation_prot"/>
</dbReference>
<dbReference type="InterPro" id="IPR001627">
    <property type="entry name" value="Semap_dom"/>
</dbReference>
<dbReference type="InterPro" id="IPR036352">
    <property type="entry name" value="Semap_dom_sf"/>
</dbReference>
<dbReference type="InterPro" id="IPR041019">
    <property type="entry name" value="TIG1_plexin"/>
</dbReference>
<dbReference type="InterPro" id="IPR041362">
    <property type="entry name" value="TIG2_plexin"/>
</dbReference>
<dbReference type="InterPro" id="IPR015943">
    <property type="entry name" value="WD40/YVTN_repeat-like_dom_sf"/>
</dbReference>
<dbReference type="PANTHER" id="PTHR22625">
    <property type="entry name" value="PLEXIN"/>
    <property type="match status" value="1"/>
</dbReference>
<dbReference type="PANTHER" id="PTHR22625:SF32">
    <property type="entry name" value="PLEXIN-A3"/>
    <property type="match status" value="1"/>
</dbReference>
<dbReference type="Pfam" id="PF08337">
    <property type="entry name" value="Plexin_cytopl"/>
    <property type="match status" value="1"/>
</dbReference>
<dbReference type="Pfam" id="PF20170">
    <property type="entry name" value="Plexin_RBD"/>
    <property type="match status" value="1"/>
</dbReference>
<dbReference type="Pfam" id="PF01437">
    <property type="entry name" value="PSI"/>
    <property type="match status" value="2"/>
</dbReference>
<dbReference type="Pfam" id="PF24479">
    <property type="entry name" value="PSI_PlexinA-B"/>
    <property type="match status" value="1"/>
</dbReference>
<dbReference type="Pfam" id="PF01403">
    <property type="entry name" value="Sema"/>
    <property type="match status" value="1"/>
</dbReference>
<dbReference type="Pfam" id="PF01833">
    <property type="entry name" value="TIG"/>
    <property type="match status" value="4"/>
</dbReference>
<dbReference type="Pfam" id="PF18020">
    <property type="entry name" value="TIG_2"/>
    <property type="match status" value="1"/>
</dbReference>
<dbReference type="Pfam" id="PF17960">
    <property type="entry name" value="TIG_plexin"/>
    <property type="match status" value="1"/>
</dbReference>
<dbReference type="SMART" id="SM00429">
    <property type="entry name" value="IPT"/>
    <property type="match status" value="4"/>
</dbReference>
<dbReference type="SMART" id="SM00423">
    <property type="entry name" value="PSI"/>
    <property type="match status" value="3"/>
</dbReference>
<dbReference type="SMART" id="SM00630">
    <property type="entry name" value="Sema"/>
    <property type="match status" value="1"/>
</dbReference>
<dbReference type="SUPFAM" id="SSF81296">
    <property type="entry name" value="E set domains"/>
    <property type="match status" value="4"/>
</dbReference>
<dbReference type="SUPFAM" id="SSF48350">
    <property type="entry name" value="GTPase activation domain, GAP"/>
    <property type="match status" value="1"/>
</dbReference>
<dbReference type="SUPFAM" id="SSF103575">
    <property type="entry name" value="Plexin repeat"/>
    <property type="match status" value="1"/>
</dbReference>
<dbReference type="SUPFAM" id="SSF101912">
    <property type="entry name" value="Sema domain"/>
    <property type="match status" value="1"/>
</dbReference>
<dbReference type="PROSITE" id="PS51004">
    <property type="entry name" value="SEMA"/>
    <property type="match status" value="1"/>
</dbReference>